<dbReference type="EC" id="3.6.5.-" evidence="1"/>
<dbReference type="EMBL" id="AACD01000016">
    <property type="protein sequence ID" value="EAA66203.1"/>
    <property type="molecule type" value="Genomic_DNA"/>
</dbReference>
<dbReference type="EMBL" id="BN001308">
    <property type="protein sequence ID" value="CBF88177.1"/>
    <property type="molecule type" value="Genomic_DNA"/>
</dbReference>
<dbReference type="RefSeq" id="XP_658689.1">
    <property type="nucleotide sequence ID" value="XM_653597.1"/>
</dbReference>
<dbReference type="SMR" id="Q5BEE5"/>
<dbReference type="FunCoup" id="Q5BEE5">
    <property type="interactions" value="58"/>
</dbReference>
<dbReference type="STRING" id="227321.Q5BEE5"/>
<dbReference type="EnsemblFungi" id="CBF88177">
    <property type="protein sequence ID" value="CBF88177"/>
    <property type="gene ID" value="ANIA_01085"/>
</dbReference>
<dbReference type="KEGG" id="ani:ANIA_01085"/>
<dbReference type="VEuPathDB" id="FungiDB:AN1085"/>
<dbReference type="eggNOG" id="KOG2203">
    <property type="taxonomic scope" value="Eukaryota"/>
</dbReference>
<dbReference type="HOGENOM" id="CLU_011270_0_0_1"/>
<dbReference type="InParanoid" id="Q5BEE5"/>
<dbReference type="OMA" id="PIIKMTE"/>
<dbReference type="OrthoDB" id="1597724at2759"/>
<dbReference type="Proteomes" id="UP000000560">
    <property type="component" value="Chromosome VIII"/>
</dbReference>
<dbReference type="GO" id="GO:0005783">
    <property type="term" value="C:endoplasmic reticulum"/>
    <property type="evidence" value="ECO:0000318"/>
    <property type="project" value="GO_Central"/>
</dbReference>
<dbReference type="GO" id="GO:0005789">
    <property type="term" value="C:endoplasmic reticulum membrane"/>
    <property type="evidence" value="ECO:0007669"/>
    <property type="project" value="UniProtKB-SubCell"/>
</dbReference>
<dbReference type="GO" id="GO:0005525">
    <property type="term" value="F:GTP binding"/>
    <property type="evidence" value="ECO:0007669"/>
    <property type="project" value="UniProtKB-UniRule"/>
</dbReference>
<dbReference type="GO" id="GO:0003924">
    <property type="term" value="F:GTPase activity"/>
    <property type="evidence" value="ECO:0000318"/>
    <property type="project" value="GO_Central"/>
</dbReference>
<dbReference type="GO" id="GO:0016320">
    <property type="term" value="P:endoplasmic reticulum membrane fusion"/>
    <property type="evidence" value="ECO:0000318"/>
    <property type="project" value="GO_Central"/>
</dbReference>
<dbReference type="CDD" id="cd01851">
    <property type="entry name" value="GBP"/>
    <property type="match status" value="1"/>
</dbReference>
<dbReference type="FunFam" id="3.40.50.300:FF:000727">
    <property type="entry name" value="Protein SEY1 homolog"/>
    <property type="match status" value="1"/>
</dbReference>
<dbReference type="Gene3D" id="3.40.50.300">
    <property type="entry name" value="P-loop containing nucleotide triphosphate hydrolases"/>
    <property type="match status" value="1"/>
</dbReference>
<dbReference type="HAMAP" id="MF_03109">
    <property type="entry name" value="Sey1"/>
    <property type="match status" value="1"/>
</dbReference>
<dbReference type="InterPro" id="IPR030386">
    <property type="entry name" value="G_GB1_RHD3_dom"/>
</dbReference>
<dbReference type="InterPro" id="IPR027417">
    <property type="entry name" value="P-loop_NTPase"/>
</dbReference>
<dbReference type="InterPro" id="IPR008803">
    <property type="entry name" value="RHD3/Sey1"/>
</dbReference>
<dbReference type="InterPro" id="IPR046758">
    <property type="entry name" value="Sey1/RHD3-like_3HB"/>
</dbReference>
<dbReference type="PANTHER" id="PTHR45923">
    <property type="entry name" value="PROTEIN SEY1"/>
    <property type="match status" value="1"/>
</dbReference>
<dbReference type="PANTHER" id="PTHR45923:SF2">
    <property type="entry name" value="PROTEIN SEY1"/>
    <property type="match status" value="1"/>
</dbReference>
<dbReference type="Pfam" id="PF05879">
    <property type="entry name" value="RHD3_GTPase"/>
    <property type="match status" value="1"/>
</dbReference>
<dbReference type="Pfam" id="PF20428">
    <property type="entry name" value="Sey1_3HB"/>
    <property type="match status" value="1"/>
</dbReference>
<dbReference type="SUPFAM" id="SSF52540">
    <property type="entry name" value="P-loop containing nucleoside triphosphate hydrolases"/>
    <property type="match status" value="1"/>
</dbReference>
<dbReference type="PROSITE" id="PS51715">
    <property type="entry name" value="G_GB1_RHD3"/>
    <property type="match status" value="1"/>
</dbReference>
<accession>Q5BEE5</accession>
<accession>C8VTL7</accession>
<proteinExistence type="inferred from homology"/>
<organism>
    <name type="scientific">Emericella nidulans (strain FGSC A4 / ATCC 38163 / CBS 112.46 / NRRL 194 / M139)</name>
    <name type="common">Aspergillus nidulans</name>
    <dbReference type="NCBI Taxonomy" id="227321"/>
    <lineage>
        <taxon>Eukaryota</taxon>
        <taxon>Fungi</taxon>
        <taxon>Dikarya</taxon>
        <taxon>Ascomycota</taxon>
        <taxon>Pezizomycotina</taxon>
        <taxon>Eurotiomycetes</taxon>
        <taxon>Eurotiomycetidae</taxon>
        <taxon>Eurotiales</taxon>
        <taxon>Aspergillaceae</taxon>
        <taxon>Aspergillus</taxon>
        <taxon>Aspergillus subgen. Nidulantes</taxon>
    </lineage>
</organism>
<evidence type="ECO:0000255" key="1">
    <source>
        <dbReference type="HAMAP-Rule" id="MF_03109"/>
    </source>
</evidence>
<evidence type="ECO:0000255" key="2">
    <source>
        <dbReference type="PROSITE-ProRule" id="PRU01052"/>
    </source>
</evidence>
<evidence type="ECO:0000256" key="3">
    <source>
        <dbReference type="SAM" id="MobiDB-lite"/>
    </source>
</evidence>
<reference key="1">
    <citation type="journal article" date="2005" name="Nature">
        <title>Sequencing of Aspergillus nidulans and comparative analysis with A. fumigatus and A. oryzae.</title>
        <authorList>
            <person name="Galagan J.E."/>
            <person name="Calvo S.E."/>
            <person name="Cuomo C."/>
            <person name="Ma L.-J."/>
            <person name="Wortman J.R."/>
            <person name="Batzoglou S."/>
            <person name="Lee S.-I."/>
            <person name="Bastuerkmen M."/>
            <person name="Spevak C.C."/>
            <person name="Clutterbuck J."/>
            <person name="Kapitonov V."/>
            <person name="Jurka J."/>
            <person name="Scazzocchio C."/>
            <person name="Farman M.L."/>
            <person name="Butler J."/>
            <person name="Purcell S."/>
            <person name="Harris S."/>
            <person name="Braus G.H."/>
            <person name="Draht O."/>
            <person name="Busch S."/>
            <person name="D'Enfert C."/>
            <person name="Bouchier C."/>
            <person name="Goldman G.H."/>
            <person name="Bell-Pedersen D."/>
            <person name="Griffiths-Jones S."/>
            <person name="Doonan J.H."/>
            <person name="Yu J."/>
            <person name="Vienken K."/>
            <person name="Pain A."/>
            <person name="Freitag M."/>
            <person name="Selker E.U."/>
            <person name="Archer D.B."/>
            <person name="Penalva M.A."/>
            <person name="Oakley B.R."/>
            <person name="Momany M."/>
            <person name="Tanaka T."/>
            <person name="Kumagai T."/>
            <person name="Asai K."/>
            <person name="Machida M."/>
            <person name="Nierman W.C."/>
            <person name="Denning D.W."/>
            <person name="Caddick M.X."/>
            <person name="Hynes M."/>
            <person name="Paoletti M."/>
            <person name="Fischer R."/>
            <person name="Miller B.L."/>
            <person name="Dyer P.S."/>
            <person name="Sachs M.S."/>
            <person name="Osmani S.A."/>
            <person name="Birren B.W."/>
        </authorList>
    </citation>
    <scope>NUCLEOTIDE SEQUENCE [LARGE SCALE GENOMIC DNA]</scope>
    <source>
        <strain>FGSC A4 / ATCC 38163 / CBS 112.46 / NRRL 194 / M139</strain>
    </source>
</reference>
<reference key="2">
    <citation type="journal article" date="2009" name="Fungal Genet. Biol.">
        <title>The 2008 update of the Aspergillus nidulans genome annotation: a community effort.</title>
        <authorList>
            <person name="Wortman J.R."/>
            <person name="Gilsenan J.M."/>
            <person name="Joardar V."/>
            <person name="Deegan J."/>
            <person name="Clutterbuck J."/>
            <person name="Andersen M.R."/>
            <person name="Archer D."/>
            <person name="Bencina M."/>
            <person name="Braus G."/>
            <person name="Coutinho P."/>
            <person name="von Dohren H."/>
            <person name="Doonan J."/>
            <person name="Driessen A.J."/>
            <person name="Durek P."/>
            <person name="Espeso E."/>
            <person name="Fekete E."/>
            <person name="Flipphi M."/>
            <person name="Estrada C.G."/>
            <person name="Geysens S."/>
            <person name="Goldman G."/>
            <person name="de Groot P.W."/>
            <person name="Hansen K."/>
            <person name="Harris S.D."/>
            <person name="Heinekamp T."/>
            <person name="Helmstaedt K."/>
            <person name="Henrissat B."/>
            <person name="Hofmann G."/>
            <person name="Homan T."/>
            <person name="Horio T."/>
            <person name="Horiuchi H."/>
            <person name="James S."/>
            <person name="Jones M."/>
            <person name="Karaffa L."/>
            <person name="Karanyi Z."/>
            <person name="Kato M."/>
            <person name="Keller N."/>
            <person name="Kelly D.E."/>
            <person name="Kiel J.A."/>
            <person name="Kim J.M."/>
            <person name="van der Klei I.J."/>
            <person name="Klis F.M."/>
            <person name="Kovalchuk A."/>
            <person name="Krasevec N."/>
            <person name="Kubicek C.P."/>
            <person name="Liu B."/>
            <person name="Maccabe A."/>
            <person name="Meyer V."/>
            <person name="Mirabito P."/>
            <person name="Miskei M."/>
            <person name="Mos M."/>
            <person name="Mullins J."/>
            <person name="Nelson D.R."/>
            <person name="Nielsen J."/>
            <person name="Oakley B.R."/>
            <person name="Osmani S.A."/>
            <person name="Pakula T."/>
            <person name="Paszewski A."/>
            <person name="Paulsen I."/>
            <person name="Pilsyk S."/>
            <person name="Pocsi I."/>
            <person name="Punt P.J."/>
            <person name="Ram A.F."/>
            <person name="Ren Q."/>
            <person name="Robellet X."/>
            <person name="Robson G."/>
            <person name="Seiboth B."/>
            <person name="van Solingen P."/>
            <person name="Specht T."/>
            <person name="Sun J."/>
            <person name="Taheri-Talesh N."/>
            <person name="Takeshita N."/>
            <person name="Ussery D."/>
            <person name="vanKuyk P.A."/>
            <person name="Visser H."/>
            <person name="van de Vondervoort P.J."/>
            <person name="de Vries R.P."/>
            <person name="Walton J."/>
            <person name="Xiang X."/>
            <person name="Xiong Y."/>
            <person name="Zeng A.P."/>
            <person name="Brandt B.W."/>
            <person name="Cornell M.J."/>
            <person name="van den Hondel C.A."/>
            <person name="Visser J."/>
            <person name="Oliver S.G."/>
            <person name="Turner G."/>
        </authorList>
    </citation>
    <scope>GENOME REANNOTATION</scope>
    <source>
        <strain>FGSC A4 / ATCC 38163 / CBS 112.46 / NRRL 194 / M139</strain>
    </source>
</reference>
<name>SEY1_EMENI</name>
<keyword id="KW-0175">Coiled coil</keyword>
<keyword id="KW-0256">Endoplasmic reticulum</keyword>
<keyword id="KW-0342">GTP-binding</keyword>
<keyword id="KW-0378">Hydrolase</keyword>
<keyword id="KW-0472">Membrane</keyword>
<keyword id="KW-0547">Nucleotide-binding</keyword>
<keyword id="KW-1185">Reference proteome</keyword>
<keyword id="KW-0812">Transmembrane</keyword>
<keyword id="KW-1133">Transmembrane helix</keyword>
<protein>
    <recommendedName>
        <fullName evidence="1">Protein sey1</fullName>
        <ecNumber evidence="1">3.6.5.-</ecNumber>
    </recommendedName>
</protein>
<sequence length="858" mass="96806">MATNGHFAPIGSDSSDKTTYEHGVQVIDENKEFNTNLTKYLTFENVTPAGFNYHLISVFGSQSTGKSTLLNHLFGTHFSVMAETERRQTTKGIWLSKNKNGDGKSMADNILVMDVEGTDGRERGEDQDFERKSALFALATSEVLIVNIWEHQVGLYQGANMGLLKTVFEVNLQLFLKDKNTTHRSLLFFVIRDFVGTTPLKALQKTLMEDMSRLWDSISKPPGLERSTVHDYFDFQFYGLPHKSYQPEKFVEETKKLSLRFREGQKNATLNAQNGEFSEGGVFLPEYHRRIPADGFSVYAEGIWDQIVNNKDLDLPTQQELLAQFRCDEILREVMVAFDEAIFPFEDKQSQASRLGEPEVLGGLGAAMRSARAKATKNFETEASRYHKGVYQRKRAELEGKVDTRLKALFQGQLNAAHKSGINDFSDAVTAEVKAGQKKGTGYDFAEIVNDEVKKALQKYEEVARATVVEGAPWSNYQQELALYEKELSEVSARLRRDEMRRLATRVERWVQSRLGESVGLEFNALGSGRAGGAAPESGEKPSEKKFWDRVWNLFVETVLDAERRFTDRASSFDASLEEVDVGLWRLRRKSWGVLRAKIEEEMTEGNLLLKLRENFEDKFRYDEAGVPRIWRPTDDIEGIYTRARESTLTLIPLLSRFRLAETSAPPPLDRWVGHTPSSATTADEEDLPPIGGVDEEEGKSLEEEMTILGDAKRQELTIRFKKAADGVYVEAKRSAIGGMTQVPLYFYGILLALGWNEIVAVLRNPAYFFLLFVCAVGAYVTYQLNLWGPILKMTEAASNQAMIEGKRRLREFLETSDTGRQAIAMSSSGSSRSGNEHEMSRLNKQGKSSTDEDVDDL</sequence>
<gene>
    <name type="primary">sey1</name>
    <name type="ORF">AN1085</name>
</gene>
<feature type="chain" id="PRO_0000155133" description="Protein sey1">
    <location>
        <begin position="1"/>
        <end position="858"/>
    </location>
</feature>
<feature type="topological domain" description="Cytoplasmic" evidence="1">
    <location>
        <begin position="1"/>
        <end position="742"/>
    </location>
</feature>
<feature type="transmembrane region" description="Helical" evidence="1">
    <location>
        <begin position="743"/>
        <end position="763"/>
    </location>
</feature>
<feature type="topological domain" description="Lumenal" evidence="1">
    <location>
        <begin position="764"/>
        <end position="766"/>
    </location>
</feature>
<feature type="transmembrane region" description="Helical" evidence="1">
    <location>
        <begin position="767"/>
        <end position="787"/>
    </location>
</feature>
<feature type="topological domain" description="Cytoplasmic" evidence="1">
    <location>
        <begin position="788"/>
        <end position="858"/>
    </location>
</feature>
<feature type="domain" description="GB1/RHD3-type G" evidence="2">
    <location>
        <begin position="50"/>
        <end position="300"/>
    </location>
</feature>
<feature type="region of interest" description="Disordered" evidence="3">
    <location>
        <begin position="669"/>
        <end position="697"/>
    </location>
</feature>
<feature type="region of interest" description="Disordered" evidence="3">
    <location>
        <begin position="821"/>
        <end position="858"/>
    </location>
</feature>
<feature type="coiled-coil region" evidence="1">
    <location>
        <begin position="443"/>
        <end position="501"/>
    </location>
</feature>
<feature type="compositionally biased region" description="Acidic residues" evidence="3">
    <location>
        <begin position="683"/>
        <end position="697"/>
    </location>
</feature>
<feature type="binding site" evidence="1">
    <location>
        <begin position="60"/>
        <end position="67"/>
    </location>
    <ligand>
        <name>GTP</name>
        <dbReference type="ChEBI" id="CHEBI:37565"/>
    </ligand>
</feature>
<comment type="function">
    <text evidence="1">Cooperates with the reticulon proteins and tubule-shaping DP1 family proteins to generate and maintain the structure of the tubular endoplasmic reticulum network. Has GTPase activity, which is required for its function in ER organization.</text>
</comment>
<comment type="subcellular location">
    <subcellularLocation>
        <location evidence="1">Endoplasmic reticulum membrane</location>
        <topology evidence="1">Multi-pass membrane protein</topology>
    </subcellularLocation>
    <text evidence="1">Enriched in the cortical ER. Concentrated in punctae along the ER tubules.</text>
</comment>
<comment type="similarity">
    <text evidence="2">Belongs to the TRAFAC class dynamin-like GTPase superfamily. GB1/RHD3 GTPase family. RHD3 subfamily.</text>
</comment>